<feature type="chain" id="PRO_0000268531" description="Bifunctional protein FolD">
    <location>
        <begin position="1"/>
        <end position="293"/>
    </location>
</feature>
<feature type="binding site" evidence="1">
    <location>
        <begin position="165"/>
        <end position="167"/>
    </location>
    <ligand>
        <name>NADP(+)</name>
        <dbReference type="ChEBI" id="CHEBI:58349"/>
    </ligand>
</feature>
<feature type="binding site" evidence="1">
    <location>
        <position position="190"/>
    </location>
    <ligand>
        <name>NADP(+)</name>
        <dbReference type="ChEBI" id="CHEBI:58349"/>
    </ligand>
</feature>
<feature type="binding site" evidence="1">
    <location>
        <position position="231"/>
    </location>
    <ligand>
        <name>NADP(+)</name>
        <dbReference type="ChEBI" id="CHEBI:58349"/>
    </ligand>
</feature>
<reference key="1">
    <citation type="journal article" date="2006" name="Proc. Natl. Acad. Sci. U.S.A.">
        <title>Genome sequence of Synechococcus CC9311: insights into adaptation to a coastal environment.</title>
        <authorList>
            <person name="Palenik B."/>
            <person name="Ren Q."/>
            <person name="Dupont C.L."/>
            <person name="Myers G.S."/>
            <person name="Heidelberg J.F."/>
            <person name="Badger J.H."/>
            <person name="Madupu R."/>
            <person name="Nelson W.C."/>
            <person name="Brinkac L.M."/>
            <person name="Dodson R.J."/>
            <person name="Durkin A.S."/>
            <person name="Daugherty S.C."/>
            <person name="Sullivan S.A."/>
            <person name="Khouri H."/>
            <person name="Mohamoud Y."/>
            <person name="Halpin R."/>
            <person name="Paulsen I.T."/>
        </authorList>
    </citation>
    <scope>NUCLEOTIDE SEQUENCE [LARGE SCALE GENOMIC DNA]</scope>
    <source>
        <strain>CC9311</strain>
    </source>
</reference>
<proteinExistence type="inferred from homology"/>
<gene>
    <name evidence="1" type="primary">folD</name>
    <name type="ordered locus">sync_0990</name>
</gene>
<dbReference type="EC" id="1.5.1.5" evidence="1"/>
<dbReference type="EC" id="3.5.4.9" evidence="1"/>
<dbReference type="EMBL" id="CP000435">
    <property type="protein sequence ID" value="ABI45900.1"/>
    <property type="molecule type" value="Genomic_DNA"/>
</dbReference>
<dbReference type="RefSeq" id="WP_011618925.1">
    <property type="nucleotide sequence ID" value="NC_008319.1"/>
</dbReference>
<dbReference type="SMR" id="Q0IBG9"/>
<dbReference type="STRING" id="64471.sync_0990"/>
<dbReference type="KEGG" id="syg:sync_0990"/>
<dbReference type="eggNOG" id="COG0190">
    <property type="taxonomic scope" value="Bacteria"/>
</dbReference>
<dbReference type="HOGENOM" id="CLU_034045_2_1_3"/>
<dbReference type="OrthoDB" id="9803580at2"/>
<dbReference type="UniPathway" id="UPA00193"/>
<dbReference type="Proteomes" id="UP000001961">
    <property type="component" value="Chromosome"/>
</dbReference>
<dbReference type="GO" id="GO:0005829">
    <property type="term" value="C:cytosol"/>
    <property type="evidence" value="ECO:0007669"/>
    <property type="project" value="TreeGrafter"/>
</dbReference>
<dbReference type="GO" id="GO:0004477">
    <property type="term" value="F:methenyltetrahydrofolate cyclohydrolase activity"/>
    <property type="evidence" value="ECO:0007669"/>
    <property type="project" value="UniProtKB-UniRule"/>
</dbReference>
<dbReference type="GO" id="GO:0004488">
    <property type="term" value="F:methylenetetrahydrofolate dehydrogenase (NADP+) activity"/>
    <property type="evidence" value="ECO:0007669"/>
    <property type="project" value="UniProtKB-UniRule"/>
</dbReference>
<dbReference type="GO" id="GO:0000105">
    <property type="term" value="P:L-histidine biosynthetic process"/>
    <property type="evidence" value="ECO:0007669"/>
    <property type="project" value="UniProtKB-KW"/>
</dbReference>
<dbReference type="GO" id="GO:0009086">
    <property type="term" value="P:methionine biosynthetic process"/>
    <property type="evidence" value="ECO:0007669"/>
    <property type="project" value="UniProtKB-KW"/>
</dbReference>
<dbReference type="GO" id="GO:0006164">
    <property type="term" value="P:purine nucleotide biosynthetic process"/>
    <property type="evidence" value="ECO:0007669"/>
    <property type="project" value="UniProtKB-KW"/>
</dbReference>
<dbReference type="GO" id="GO:0035999">
    <property type="term" value="P:tetrahydrofolate interconversion"/>
    <property type="evidence" value="ECO:0007669"/>
    <property type="project" value="UniProtKB-UniRule"/>
</dbReference>
<dbReference type="CDD" id="cd01080">
    <property type="entry name" value="NAD_bind_m-THF_DH_Cyclohyd"/>
    <property type="match status" value="1"/>
</dbReference>
<dbReference type="FunFam" id="3.40.50.720:FF:000006">
    <property type="entry name" value="Bifunctional protein FolD"/>
    <property type="match status" value="1"/>
</dbReference>
<dbReference type="FunFam" id="3.40.50.10860:FF:000005">
    <property type="entry name" value="C-1-tetrahydrofolate synthase, cytoplasmic, putative"/>
    <property type="match status" value="1"/>
</dbReference>
<dbReference type="Gene3D" id="3.40.50.10860">
    <property type="entry name" value="Leucine Dehydrogenase, chain A, domain 1"/>
    <property type="match status" value="1"/>
</dbReference>
<dbReference type="Gene3D" id="3.40.50.720">
    <property type="entry name" value="NAD(P)-binding Rossmann-like Domain"/>
    <property type="match status" value="1"/>
</dbReference>
<dbReference type="HAMAP" id="MF_01576">
    <property type="entry name" value="THF_DHG_CYH"/>
    <property type="match status" value="1"/>
</dbReference>
<dbReference type="InterPro" id="IPR046346">
    <property type="entry name" value="Aminoacid_DH-like_N_sf"/>
</dbReference>
<dbReference type="InterPro" id="IPR036291">
    <property type="entry name" value="NAD(P)-bd_dom_sf"/>
</dbReference>
<dbReference type="InterPro" id="IPR000672">
    <property type="entry name" value="THF_DH/CycHdrlase"/>
</dbReference>
<dbReference type="InterPro" id="IPR020630">
    <property type="entry name" value="THF_DH/CycHdrlase_cat_dom"/>
</dbReference>
<dbReference type="InterPro" id="IPR020867">
    <property type="entry name" value="THF_DH/CycHdrlase_CS"/>
</dbReference>
<dbReference type="InterPro" id="IPR020631">
    <property type="entry name" value="THF_DH/CycHdrlase_NAD-bd_dom"/>
</dbReference>
<dbReference type="NCBIfam" id="NF010783">
    <property type="entry name" value="PRK14186.1"/>
    <property type="match status" value="1"/>
</dbReference>
<dbReference type="PANTHER" id="PTHR48099:SF5">
    <property type="entry name" value="C-1-TETRAHYDROFOLATE SYNTHASE, CYTOPLASMIC"/>
    <property type="match status" value="1"/>
</dbReference>
<dbReference type="PANTHER" id="PTHR48099">
    <property type="entry name" value="C-1-TETRAHYDROFOLATE SYNTHASE, CYTOPLASMIC-RELATED"/>
    <property type="match status" value="1"/>
</dbReference>
<dbReference type="Pfam" id="PF00763">
    <property type="entry name" value="THF_DHG_CYH"/>
    <property type="match status" value="1"/>
</dbReference>
<dbReference type="Pfam" id="PF02882">
    <property type="entry name" value="THF_DHG_CYH_C"/>
    <property type="match status" value="1"/>
</dbReference>
<dbReference type="PRINTS" id="PR00085">
    <property type="entry name" value="THFDHDRGNASE"/>
</dbReference>
<dbReference type="SUPFAM" id="SSF53223">
    <property type="entry name" value="Aminoacid dehydrogenase-like, N-terminal domain"/>
    <property type="match status" value="1"/>
</dbReference>
<dbReference type="SUPFAM" id="SSF51735">
    <property type="entry name" value="NAD(P)-binding Rossmann-fold domains"/>
    <property type="match status" value="1"/>
</dbReference>
<dbReference type="PROSITE" id="PS00766">
    <property type="entry name" value="THF_DHG_CYH_1"/>
    <property type="match status" value="1"/>
</dbReference>
<dbReference type="PROSITE" id="PS00767">
    <property type="entry name" value="THF_DHG_CYH_2"/>
    <property type="match status" value="1"/>
</dbReference>
<sequence>MALRLDGKQLAAQLEVRLQQQIQKGIAAAGRSPGLAVLRIGDDPASAVYVRNKEKACARIGVESFGSHLPADASQQEVLTAIRELNADDRVDGILLQLPLPEGLDETPLLAEIDPNKDADGLHTLNLGRLLKGEQGPRSCTPAGVMVMLRDQGIDPAGKRAVVVGRSILVGQPMALMLQAANATVTVAHSRTQHLESITRQAEILVVAAGRPEMIGADHITPGCVVVDVGIHRRPEGGLCGDVCAEELEPVAAALSPVPGGVGPMTVTMLLVNTVLAWCRRHQVALELSDLVV</sequence>
<comment type="function">
    <text evidence="1">Catalyzes the oxidation of 5,10-methylenetetrahydrofolate to 5,10-methenyltetrahydrofolate and then the hydrolysis of 5,10-methenyltetrahydrofolate to 10-formyltetrahydrofolate.</text>
</comment>
<comment type="catalytic activity">
    <reaction evidence="1">
        <text>(6R)-5,10-methylene-5,6,7,8-tetrahydrofolate + NADP(+) = (6R)-5,10-methenyltetrahydrofolate + NADPH</text>
        <dbReference type="Rhea" id="RHEA:22812"/>
        <dbReference type="ChEBI" id="CHEBI:15636"/>
        <dbReference type="ChEBI" id="CHEBI:57455"/>
        <dbReference type="ChEBI" id="CHEBI:57783"/>
        <dbReference type="ChEBI" id="CHEBI:58349"/>
        <dbReference type="EC" id="1.5.1.5"/>
    </reaction>
</comment>
<comment type="catalytic activity">
    <reaction evidence="1">
        <text>(6R)-5,10-methenyltetrahydrofolate + H2O = (6R)-10-formyltetrahydrofolate + H(+)</text>
        <dbReference type="Rhea" id="RHEA:23700"/>
        <dbReference type="ChEBI" id="CHEBI:15377"/>
        <dbReference type="ChEBI" id="CHEBI:15378"/>
        <dbReference type="ChEBI" id="CHEBI:57455"/>
        <dbReference type="ChEBI" id="CHEBI:195366"/>
        <dbReference type="EC" id="3.5.4.9"/>
    </reaction>
</comment>
<comment type="pathway">
    <text evidence="1">One-carbon metabolism; tetrahydrofolate interconversion.</text>
</comment>
<comment type="subunit">
    <text evidence="1">Homodimer.</text>
</comment>
<comment type="similarity">
    <text evidence="1">Belongs to the tetrahydrofolate dehydrogenase/cyclohydrolase family.</text>
</comment>
<name>FOLD_SYNS3</name>
<accession>Q0IBG9</accession>
<protein>
    <recommendedName>
        <fullName evidence="1">Bifunctional protein FolD</fullName>
    </recommendedName>
    <domain>
        <recommendedName>
            <fullName evidence="1">Methylenetetrahydrofolate dehydrogenase</fullName>
            <ecNumber evidence="1">1.5.1.5</ecNumber>
        </recommendedName>
    </domain>
    <domain>
        <recommendedName>
            <fullName evidence="1">Methenyltetrahydrofolate cyclohydrolase</fullName>
            <ecNumber evidence="1">3.5.4.9</ecNumber>
        </recommendedName>
    </domain>
</protein>
<organism>
    <name type="scientific">Synechococcus sp. (strain CC9311)</name>
    <dbReference type="NCBI Taxonomy" id="64471"/>
    <lineage>
        <taxon>Bacteria</taxon>
        <taxon>Bacillati</taxon>
        <taxon>Cyanobacteriota</taxon>
        <taxon>Cyanophyceae</taxon>
        <taxon>Synechococcales</taxon>
        <taxon>Synechococcaceae</taxon>
        <taxon>Synechococcus</taxon>
    </lineage>
</organism>
<evidence type="ECO:0000255" key="1">
    <source>
        <dbReference type="HAMAP-Rule" id="MF_01576"/>
    </source>
</evidence>
<keyword id="KW-0028">Amino-acid biosynthesis</keyword>
<keyword id="KW-0368">Histidine biosynthesis</keyword>
<keyword id="KW-0378">Hydrolase</keyword>
<keyword id="KW-0486">Methionine biosynthesis</keyword>
<keyword id="KW-0511">Multifunctional enzyme</keyword>
<keyword id="KW-0521">NADP</keyword>
<keyword id="KW-0554">One-carbon metabolism</keyword>
<keyword id="KW-0560">Oxidoreductase</keyword>
<keyword id="KW-0658">Purine biosynthesis</keyword>
<keyword id="KW-1185">Reference proteome</keyword>